<gene>
    <name evidence="1" type="primary">zapB</name>
    <name type="ordered locus">Ent638_4045</name>
</gene>
<sequence>MTMSLEVFEKLESKVQQAIDTITLLQMEIEELKEKNNALAQEVHSAQNGREELERENQQLREQQNGWQDRLQALLGRMEEV</sequence>
<feature type="chain" id="PRO_0000333897" description="Cell division protein ZapB">
    <location>
        <begin position="1"/>
        <end position="81"/>
    </location>
</feature>
<feature type="region of interest" description="Disordered" evidence="2">
    <location>
        <begin position="43"/>
        <end position="64"/>
    </location>
</feature>
<feature type="coiled-coil region" evidence="1">
    <location>
        <begin position="5"/>
        <end position="81"/>
    </location>
</feature>
<feature type="compositionally biased region" description="Basic and acidic residues" evidence="2">
    <location>
        <begin position="49"/>
        <end position="59"/>
    </location>
</feature>
<comment type="function">
    <text evidence="1">Non-essential, abundant cell division factor that is required for proper Z-ring formation. It is recruited early to the divisome by direct interaction with FtsZ, stimulating Z-ring assembly and thereby promoting cell division earlier in the cell cycle. Its recruitment to the Z-ring requires functional FtsA or ZipA.</text>
</comment>
<comment type="subunit">
    <text evidence="1">Homodimer. The ends of the coiled-coil dimer bind to each other, forming polymers. Interacts with FtsZ.</text>
</comment>
<comment type="subcellular location">
    <subcellularLocation>
        <location>Cytoplasm</location>
    </subcellularLocation>
    <text evidence="1">Localizes to the septum at mid-cell, in a FtsZ-like pattern.</text>
</comment>
<comment type="similarity">
    <text evidence="1">Belongs to the ZapB family.</text>
</comment>
<comment type="sequence caution" evidence="3">
    <conflict type="erroneous initiation">
        <sequence resource="EMBL-CDS" id="ABP62700"/>
    </conflict>
</comment>
<proteinExistence type="inferred from homology"/>
<evidence type="ECO:0000255" key="1">
    <source>
        <dbReference type="HAMAP-Rule" id="MF_01196"/>
    </source>
</evidence>
<evidence type="ECO:0000256" key="2">
    <source>
        <dbReference type="SAM" id="MobiDB-lite"/>
    </source>
</evidence>
<evidence type="ECO:0000305" key="3"/>
<name>ZAPB_ENT38</name>
<dbReference type="EMBL" id="CP000653">
    <property type="protein sequence ID" value="ABP62700.1"/>
    <property type="status" value="ALT_INIT"/>
    <property type="molecule type" value="Genomic_DNA"/>
</dbReference>
<dbReference type="RefSeq" id="WP_190275359.1">
    <property type="nucleotide sequence ID" value="NC_009436.1"/>
</dbReference>
<dbReference type="SMR" id="A4WG70"/>
<dbReference type="STRING" id="399742.Ent638_4045"/>
<dbReference type="KEGG" id="ent:Ent638_4045"/>
<dbReference type="eggNOG" id="COG3074">
    <property type="taxonomic scope" value="Bacteria"/>
</dbReference>
<dbReference type="HOGENOM" id="CLU_171174_2_0_6"/>
<dbReference type="Proteomes" id="UP000000230">
    <property type="component" value="Chromosome"/>
</dbReference>
<dbReference type="GO" id="GO:0005737">
    <property type="term" value="C:cytoplasm"/>
    <property type="evidence" value="ECO:0007669"/>
    <property type="project" value="UniProtKB-SubCell"/>
</dbReference>
<dbReference type="GO" id="GO:0016020">
    <property type="term" value="C:membrane"/>
    <property type="evidence" value="ECO:0007669"/>
    <property type="project" value="InterPro"/>
</dbReference>
<dbReference type="GO" id="GO:0000917">
    <property type="term" value="P:division septum assembly"/>
    <property type="evidence" value="ECO:0007669"/>
    <property type="project" value="UniProtKB-KW"/>
</dbReference>
<dbReference type="GO" id="GO:0043093">
    <property type="term" value="P:FtsZ-dependent cytokinesis"/>
    <property type="evidence" value="ECO:0007669"/>
    <property type="project" value="UniProtKB-UniRule"/>
</dbReference>
<dbReference type="GO" id="GO:0016192">
    <property type="term" value="P:vesicle-mediated transport"/>
    <property type="evidence" value="ECO:0007669"/>
    <property type="project" value="InterPro"/>
</dbReference>
<dbReference type="Gene3D" id="1.20.5.340">
    <property type="match status" value="1"/>
</dbReference>
<dbReference type="HAMAP" id="MF_01196">
    <property type="entry name" value="ZapB"/>
    <property type="match status" value="1"/>
</dbReference>
<dbReference type="InterPro" id="IPR009252">
    <property type="entry name" value="Cell_div_ZapB"/>
</dbReference>
<dbReference type="InterPro" id="IPR010989">
    <property type="entry name" value="SNARE"/>
</dbReference>
<dbReference type="NCBIfam" id="NF011951">
    <property type="entry name" value="PRK15422.1"/>
    <property type="match status" value="1"/>
</dbReference>
<dbReference type="Pfam" id="PF06005">
    <property type="entry name" value="ZapB"/>
    <property type="match status" value="1"/>
</dbReference>
<dbReference type="SUPFAM" id="SSF47661">
    <property type="entry name" value="t-snare proteins"/>
    <property type="match status" value="1"/>
</dbReference>
<reference key="1">
    <citation type="journal article" date="2010" name="PLoS Genet.">
        <title>Genome sequence of the plant growth promoting endophytic bacterium Enterobacter sp. 638.</title>
        <authorList>
            <person name="Taghavi S."/>
            <person name="van der Lelie D."/>
            <person name="Hoffman A."/>
            <person name="Zhang Y.B."/>
            <person name="Walla M.D."/>
            <person name="Vangronsveld J."/>
            <person name="Newman L."/>
            <person name="Monchy S."/>
        </authorList>
    </citation>
    <scope>NUCLEOTIDE SEQUENCE [LARGE SCALE GENOMIC DNA]</scope>
    <source>
        <strain>638</strain>
    </source>
</reference>
<organism>
    <name type="scientific">Enterobacter sp. (strain 638)</name>
    <dbReference type="NCBI Taxonomy" id="399742"/>
    <lineage>
        <taxon>Bacteria</taxon>
        <taxon>Pseudomonadati</taxon>
        <taxon>Pseudomonadota</taxon>
        <taxon>Gammaproteobacteria</taxon>
        <taxon>Enterobacterales</taxon>
        <taxon>Enterobacteriaceae</taxon>
        <taxon>Enterobacter</taxon>
    </lineage>
</organism>
<keyword id="KW-0131">Cell cycle</keyword>
<keyword id="KW-0132">Cell division</keyword>
<keyword id="KW-0175">Coiled coil</keyword>
<keyword id="KW-0963">Cytoplasm</keyword>
<keyword id="KW-0717">Septation</keyword>
<accession>A4WG70</accession>
<protein>
    <recommendedName>
        <fullName evidence="1">Cell division protein ZapB</fullName>
    </recommendedName>
</protein>